<reference key="1">
    <citation type="journal article" date="2003" name="J. Bacteriol.">
        <title>Complete genome sequence of the oral pathogenic bacterium Porphyromonas gingivalis strain W83.</title>
        <authorList>
            <person name="Nelson K.E."/>
            <person name="Fleischmann R.D."/>
            <person name="DeBoy R.T."/>
            <person name="Paulsen I.T."/>
            <person name="Fouts D.E."/>
            <person name="Eisen J.A."/>
            <person name="Daugherty S.C."/>
            <person name="Dodson R.J."/>
            <person name="Durkin A.S."/>
            <person name="Gwinn M.L."/>
            <person name="Haft D.H."/>
            <person name="Kolonay J.F."/>
            <person name="Nelson W.C."/>
            <person name="Mason T.M."/>
            <person name="Tallon L."/>
            <person name="Gray J."/>
            <person name="Granger D."/>
            <person name="Tettelin H."/>
            <person name="Dong H."/>
            <person name="Galvin J.L."/>
            <person name="Duncan M.J."/>
            <person name="Dewhirst F.E."/>
            <person name="Fraser C.M."/>
        </authorList>
    </citation>
    <scope>NUCLEOTIDE SEQUENCE [LARGE SCALE GENOMIC DNA]</scope>
    <source>
        <strain>ATCC BAA-308 / W83</strain>
    </source>
</reference>
<reference key="2">
    <citation type="submission" date="1996-02" db="EMBL/GenBank/DDBJ databases">
        <title>Molecular analysis of PgaA an antigen from periodontopathogen Porphyromonas gingivalis.</title>
        <authorList>
            <person name="Rigg G.P."/>
            <person name="Roberts I.S."/>
        </authorList>
    </citation>
    <scope>NUCLEOTIDE SEQUENCE [GENOMIC DNA] OF 34-201</scope>
    <source>
        <strain>ATCC BAA-308 / W83</strain>
    </source>
</reference>
<organism>
    <name type="scientific">Porphyromonas gingivalis (strain ATCC BAA-308 / W83)</name>
    <dbReference type="NCBI Taxonomy" id="242619"/>
    <lineage>
        <taxon>Bacteria</taxon>
        <taxon>Pseudomonadati</taxon>
        <taxon>Bacteroidota</taxon>
        <taxon>Bacteroidia</taxon>
        <taxon>Bacteroidales</taxon>
        <taxon>Porphyromonadaceae</taxon>
        <taxon>Porphyromonas</taxon>
    </lineage>
</organism>
<feature type="chain" id="PRO_0000111601" description="Ribonuclease HII">
    <location>
        <begin position="1"/>
        <end position="201"/>
    </location>
</feature>
<feature type="domain" description="RNase H type-2" evidence="2">
    <location>
        <begin position="11"/>
        <end position="201"/>
    </location>
</feature>
<feature type="binding site" evidence="1">
    <location>
        <position position="17"/>
    </location>
    <ligand>
        <name>a divalent metal cation</name>
        <dbReference type="ChEBI" id="CHEBI:60240"/>
    </ligand>
</feature>
<feature type="binding site" evidence="1">
    <location>
        <position position="18"/>
    </location>
    <ligand>
        <name>a divalent metal cation</name>
        <dbReference type="ChEBI" id="CHEBI:60240"/>
    </ligand>
</feature>
<feature type="binding site" evidence="1">
    <location>
        <position position="109"/>
    </location>
    <ligand>
        <name>a divalent metal cation</name>
        <dbReference type="ChEBI" id="CHEBI:60240"/>
    </ligand>
</feature>
<gene>
    <name type="primary">rnhB</name>
    <name type="ordered locus">PG_0736</name>
</gene>
<accession>Q51832</accession>
<keyword id="KW-0963">Cytoplasm</keyword>
<keyword id="KW-0255">Endonuclease</keyword>
<keyword id="KW-0378">Hydrolase</keyword>
<keyword id="KW-0464">Manganese</keyword>
<keyword id="KW-0479">Metal-binding</keyword>
<keyword id="KW-0540">Nuclease</keyword>
<keyword id="KW-1185">Reference proteome</keyword>
<comment type="function">
    <text evidence="1">Endonuclease that specifically degrades the RNA of RNA-DNA hybrids.</text>
</comment>
<comment type="catalytic activity">
    <reaction>
        <text>Endonucleolytic cleavage to 5'-phosphomonoester.</text>
        <dbReference type="EC" id="3.1.26.4"/>
    </reaction>
</comment>
<comment type="cofactor">
    <cofactor evidence="1">
        <name>Mn(2+)</name>
        <dbReference type="ChEBI" id="CHEBI:29035"/>
    </cofactor>
    <cofactor evidence="1">
        <name>Mg(2+)</name>
        <dbReference type="ChEBI" id="CHEBI:18420"/>
    </cofactor>
    <text evidence="1">Manganese or magnesium. Binds 1 divalent metal ion per monomer in the absence of substrate. May bind a second metal ion after substrate binding.</text>
</comment>
<comment type="subcellular location">
    <subcellularLocation>
        <location evidence="3">Cytoplasm</location>
    </subcellularLocation>
</comment>
<comment type="similarity">
    <text evidence="3">Belongs to the RNase HII family.</text>
</comment>
<sequence length="201" mass="22733">MLLSRYIDDDLRECGCDEAGRGCLAGPVYAAAVILPADFSHPLLNDSKQLSEKQRYTLRPVIESETIGWGIGIVSPQEIDEINILRASFLAMHRAIEQLPFRPERLLIDGNRFDPFEQIPHHCIVGGDARYRSIAAASILAKTYRDDSMLRLNKDFPMYGWERNKGYPSPAHKSAIRRFGVSPHHRLTFRGVVDADRPTTE</sequence>
<dbReference type="EC" id="3.1.26.4"/>
<dbReference type="EMBL" id="AE015924">
    <property type="protein sequence ID" value="AAQ65905.1"/>
    <property type="molecule type" value="Genomic_DNA"/>
</dbReference>
<dbReference type="EMBL" id="X95938">
    <property type="protein sequence ID" value="CAA65177.1"/>
    <property type="molecule type" value="Genomic_DNA"/>
</dbReference>
<dbReference type="RefSeq" id="WP_005873600.1">
    <property type="nucleotide sequence ID" value="NC_002950.2"/>
</dbReference>
<dbReference type="SMR" id="Q51832"/>
<dbReference type="STRING" id="242619.PG_0736"/>
<dbReference type="EnsemblBacteria" id="AAQ65905">
    <property type="protein sequence ID" value="AAQ65905"/>
    <property type="gene ID" value="PG_0736"/>
</dbReference>
<dbReference type="KEGG" id="pgi:PG_0736"/>
<dbReference type="eggNOG" id="COG0164">
    <property type="taxonomic scope" value="Bacteria"/>
</dbReference>
<dbReference type="HOGENOM" id="CLU_036532_3_1_10"/>
<dbReference type="Proteomes" id="UP000000588">
    <property type="component" value="Chromosome"/>
</dbReference>
<dbReference type="GO" id="GO:0005737">
    <property type="term" value="C:cytoplasm"/>
    <property type="evidence" value="ECO:0007669"/>
    <property type="project" value="UniProtKB-SubCell"/>
</dbReference>
<dbReference type="GO" id="GO:0032299">
    <property type="term" value="C:ribonuclease H2 complex"/>
    <property type="evidence" value="ECO:0007669"/>
    <property type="project" value="TreeGrafter"/>
</dbReference>
<dbReference type="GO" id="GO:0030145">
    <property type="term" value="F:manganese ion binding"/>
    <property type="evidence" value="ECO:0007669"/>
    <property type="project" value="UniProtKB-UniRule"/>
</dbReference>
<dbReference type="GO" id="GO:0003723">
    <property type="term" value="F:RNA binding"/>
    <property type="evidence" value="ECO:0007669"/>
    <property type="project" value="InterPro"/>
</dbReference>
<dbReference type="GO" id="GO:0004523">
    <property type="term" value="F:RNA-DNA hybrid ribonuclease activity"/>
    <property type="evidence" value="ECO:0007669"/>
    <property type="project" value="UniProtKB-UniRule"/>
</dbReference>
<dbReference type="GO" id="GO:0043137">
    <property type="term" value="P:DNA replication, removal of RNA primer"/>
    <property type="evidence" value="ECO:0007669"/>
    <property type="project" value="TreeGrafter"/>
</dbReference>
<dbReference type="GO" id="GO:0006298">
    <property type="term" value="P:mismatch repair"/>
    <property type="evidence" value="ECO:0007669"/>
    <property type="project" value="TreeGrafter"/>
</dbReference>
<dbReference type="CDD" id="cd07182">
    <property type="entry name" value="RNase_HII_bacteria_HII_like"/>
    <property type="match status" value="1"/>
</dbReference>
<dbReference type="Gene3D" id="3.30.420.10">
    <property type="entry name" value="Ribonuclease H-like superfamily/Ribonuclease H"/>
    <property type="match status" value="1"/>
</dbReference>
<dbReference type="HAMAP" id="MF_00052_B">
    <property type="entry name" value="RNase_HII_B"/>
    <property type="match status" value="1"/>
</dbReference>
<dbReference type="InterPro" id="IPR022898">
    <property type="entry name" value="RNase_HII"/>
</dbReference>
<dbReference type="InterPro" id="IPR001352">
    <property type="entry name" value="RNase_HII/HIII"/>
</dbReference>
<dbReference type="InterPro" id="IPR024567">
    <property type="entry name" value="RNase_HII/HIII_dom"/>
</dbReference>
<dbReference type="InterPro" id="IPR012337">
    <property type="entry name" value="RNaseH-like_sf"/>
</dbReference>
<dbReference type="InterPro" id="IPR036397">
    <property type="entry name" value="RNaseH_sf"/>
</dbReference>
<dbReference type="NCBIfam" id="NF000595">
    <property type="entry name" value="PRK00015.1-3"/>
    <property type="match status" value="1"/>
</dbReference>
<dbReference type="PANTHER" id="PTHR10954">
    <property type="entry name" value="RIBONUCLEASE H2 SUBUNIT A"/>
    <property type="match status" value="1"/>
</dbReference>
<dbReference type="PANTHER" id="PTHR10954:SF18">
    <property type="entry name" value="RIBONUCLEASE HII"/>
    <property type="match status" value="1"/>
</dbReference>
<dbReference type="Pfam" id="PF01351">
    <property type="entry name" value="RNase_HII"/>
    <property type="match status" value="1"/>
</dbReference>
<dbReference type="SUPFAM" id="SSF53098">
    <property type="entry name" value="Ribonuclease H-like"/>
    <property type="match status" value="1"/>
</dbReference>
<dbReference type="PROSITE" id="PS51975">
    <property type="entry name" value="RNASE_H_2"/>
    <property type="match status" value="1"/>
</dbReference>
<protein>
    <recommendedName>
        <fullName>Ribonuclease HII</fullName>
        <shortName>RNase HII</shortName>
        <ecNumber>3.1.26.4</ecNumber>
    </recommendedName>
</protein>
<evidence type="ECO:0000250" key="1"/>
<evidence type="ECO:0000255" key="2">
    <source>
        <dbReference type="PROSITE-ProRule" id="PRU01319"/>
    </source>
</evidence>
<evidence type="ECO:0000305" key="3"/>
<name>RNH2_PORGI</name>
<proteinExistence type="inferred from homology"/>